<evidence type="ECO:0000255" key="1">
    <source>
        <dbReference type="HAMAP-Rule" id="MF_03015"/>
    </source>
</evidence>
<evidence type="ECO:0000305" key="2"/>
<protein>
    <recommendedName>
        <fullName evidence="1">Small ribosomal subunit protein uS2C</fullName>
    </recommendedName>
    <alternativeName>
        <fullName evidence="2">40S ribosomal protein S0-C</fullName>
    </alternativeName>
</protein>
<accession>B6K2L2</accession>
<comment type="function">
    <text evidence="1">Required for the assembly and/or stability of the 40S ribosomal subunit. Required for the processing of the 20S rRNA-precursor to mature 18S rRNA in a late step of the maturation of 40S ribosomal subunits.</text>
</comment>
<comment type="subunit">
    <text evidence="1">Component of the small ribosomal subunit. Mature ribosomes consist of a small (40S) and a large (60S) subunit. The 40S subunit contains about 33 different proteins and 1 molecule of RNA (18S). The 60S subunit contains about 49 different proteins and 3 molecules of RNA (25S, 5.8S and 5S). Interacts with rps21.</text>
</comment>
<comment type="subcellular location">
    <subcellularLocation>
        <location evidence="1">Cytoplasm</location>
    </subcellularLocation>
</comment>
<comment type="similarity">
    <text evidence="1">Belongs to the universal ribosomal protein uS2 family.</text>
</comment>
<sequence>MAESVAHPSVLNATEEDIKQLLAASCHIGSKNLEIRMENYVWKRRADGVNIINIGKTWEKIVLAARIIATVENPADVCVVSSRPYGHRAVLKFAAHTGATAIAGRFTPGNFTNYITRTFREPRLIIATDPRADAQAIKEASYVNIPVIALCDTDSPLAHVDVAIPTNNKGYKSIGLVWWLLAREVLRLRGALTRTGAWDVMVDMYFYRDPEEIEREEEAKAAAEAAAEAATTAEAAAEFEAVAAGAVDADVLAAATAGQVGEGAWDEAATGDWSTVGASTSDWTATAAQ</sequence>
<name>RSSA3_SCHJY</name>
<feature type="chain" id="PRO_0000389290" description="Small ribosomal subunit protein uS2C">
    <location>
        <begin position="1"/>
        <end position="289"/>
    </location>
</feature>
<keyword id="KW-0963">Cytoplasm</keyword>
<keyword id="KW-1185">Reference proteome</keyword>
<keyword id="KW-0687">Ribonucleoprotein</keyword>
<keyword id="KW-0689">Ribosomal protein</keyword>
<gene>
    <name type="primary">rps0c</name>
    <name type="ORF">SJAG_02479</name>
</gene>
<reference key="1">
    <citation type="journal article" date="2011" name="Science">
        <title>Comparative functional genomics of the fission yeasts.</title>
        <authorList>
            <person name="Rhind N."/>
            <person name="Chen Z."/>
            <person name="Yassour M."/>
            <person name="Thompson D.A."/>
            <person name="Haas B.J."/>
            <person name="Habib N."/>
            <person name="Wapinski I."/>
            <person name="Roy S."/>
            <person name="Lin M.F."/>
            <person name="Heiman D.I."/>
            <person name="Young S.K."/>
            <person name="Furuya K."/>
            <person name="Guo Y."/>
            <person name="Pidoux A."/>
            <person name="Chen H.M."/>
            <person name="Robbertse B."/>
            <person name="Goldberg J.M."/>
            <person name="Aoki K."/>
            <person name="Bayne E.H."/>
            <person name="Berlin A.M."/>
            <person name="Desjardins C.A."/>
            <person name="Dobbs E."/>
            <person name="Dukaj L."/>
            <person name="Fan L."/>
            <person name="FitzGerald M.G."/>
            <person name="French C."/>
            <person name="Gujja S."/>
            <person name="Hansen K."/>
            <person name="Keifenheim D."/>
            <person name="Levin J.Z."/>
            <person name="Mosher R.A."/>
            <person name="Mueller C.A."/>
            <person name="Pfiffner J."/>
            <person name="Priest M."/>
            <person name="Russ C."/>
            <person name="Smialowska A."/>
            <person name="Swoboda P."/>
            <person name="Sykes S.M."/>
            <person name="Vaughn M."/>
            <person name="Vengrova S."/>
            <person name="Yoder R."/>
            <person name="Zeng Q."/>
            <person name="Allshire R."/>
            <person name="Baulcombe D."/>
            <person name="Birren B.W."/>
            <person name="Brown W."/>
            <person name="Ekwall K."/>
            <person name="Kellis M."/>
            <person name="Leatherwood J."/>
            <person name="Levin H."/>
            <person name="Margalit H."/>
            <person name="Martienssen R."/>
            <person name="Nieduszynski C.A."/>
            <person name="Spatafora J.W."/>
            <person name="Friedman N."/>
            <person name="Dalgaard J.Z."/>
            <person name="Baumann P."/>
            <person name="Niki H."/>
            <person name="Regev A."/>
            <person name="Nusbaum C."/>
        </authorList>
    </citation>
    <scope>NUCLEOTIDE SEQUENCE [LARGE SCALE GENOMIC DNA]</scope>
    <source>
        <strain>yFS275 / FY16936</strain>
    </source>
</reference>
<proteinExistence type="inferred from homology"/>
<dbReference type="EMBL" id="KE651166">
    <property type="protein sequence ID" value="EEB07393.1"/>
    <property type="molecule type" value="Genomic_DNA"/>
</dbReference>
<dbReference type="RefSeq" id="XP_002173686.1">
    <property type="nucleotide sequence ID" value="XM_002173650.2"/>
</dbReference>
<dbReference type="SMR" id="B6K2L2"/>
<dbReference type="STRING" id="402676.B6K2L2"/>
<dbReference type="EnsemblFungi" id="EEB07393">
    <property type="protein sequence ID" value="EEB07393"/>
    <property type="gene ID" value="SJAG_02479"/>
</dbReference>
<dbReference type="GeneID" id="7049230"/>
<dbReference type="JaponicusDB" id="SJAG_02479">
    <property type="gene designation" value="rps003"/>
</dbReference>
<dbReference type="VEuPathDB" id="FungiDB:SJAG_02479"/>
<dbReference type="eggNOG" id="KOG0830">
    <property type="taxonomic scope" value="Eukaryota"/>
</dbReference>
<dbReference type="HOGENOM" id="CLU_058171_2_0_1"/>
<dbReference type="OMA" id="QCHLGAK"/>
<dbReference type="OrthoDB" id="414863at2759"/>
<dbReference type="Proteomes" id="UP000001744">
    <property type="component" value="Unassembled WGS sequence"/>
</dbReference>
<dbReference type="GO" id="GO:0022627">
    <property type="term" value="C:cytosolic small ribosomal subunit"/>
    <property type="evidence" value="ECO:0000318"/>
    <property type="project" value="GO_Central"/>
</dbReference>
<dbReference type="GO" id="GO:0003735">
    <property type="term" value="F:structural constituent of ribosome"/>
    <property type="evidence" value="ECO:0000318"/>
    <property type="project" value="GO_Central"/>
</dbReference>
<dbReference type="GO" id="GO:0002181">
    <property type="term" value="P:cytoplasmic translation"/>
    <property type="evidence" value="ECO:0000318"/>
    <property type="project" value="GO_Central"/>
</dbReference>
<dbReference type="GO" id="GO:0000028">
    <property type="term" value="P:ribosomal small subunit assembly"/>
    <property type="evidence" value="ECO:0000318"/>
    <property type="project" value="GO_Central"/>
</dbReference>
<dbReference type="CDD" id="cd01425">
    <property type="entry name" value="RPS2"/>
    <property type="match status" value="1"/>
</dbReference>
<dbReference type="FunFam" id="3.40.50.10490:FF:000010">
    <property type="entry name" value="40S ribosomal protein S0"/>
    <property type="match status" value="1"/>
</dbReference>
<dbReference type="Gene3D" id="3.40.50.10490">
    <property type="entry name" value="Glucose-6-phosphate isomerase like protein, domain 1"/>
    <property type="match status" value="1"/>
</dbReference>
<dbReference type="HAMAP" id="MF_03015">
    <property type="entry name" value="Ribosomal_S2_euk"/>
    <property type="match status" value="1"/>
</dbReference>
<dbReference type="InterPro" id="IPR001865">
    <property type="entry name" value="Ribosomal_uS2"/>
</dbReference>
<dbReference type="InterPro" id="IPR032281">
    <property type="entry name" value="Ribosomal_uS2_C"/>
</dbReference>
<dbReference type="InterPro" id="IPR027498">
    <property type="entry name" value="Ribosomal_uS2_euk"/>
</dbReference>
<dbReference type="InterPro" id="IPR005707">
    <property type="entry name" value="Ribosomal_uS2_euk/arc"/>
</dbReference>
<dbReference type="InterPro" id="IPR023591">
    <property type="entry name" value="Ribosomal_uS2_flav_dom_sf"/>
</dbReference>
<dbReference type="NCBIfam" id="TIGR01012">
    <property type="entry name" value="uS2_euk_arch"/>
    <property type="match status" value="1"/>
</dbReference>
<dbReference type="PANTHER" id="PTHR11489">
    <property type="entry name" value="40S RIBOSOMAL PROTEIN SA"/>
    <property type="match status" value="1"/>
</dbReference>
<dbReference type="Pfam" id="PF16122">
    <property type="entry name" value="40S_SA_C"/>
    <property type="match status" value="1"/>
</dbReference>
<dbReference type="Pfam" id="PF00318">
    <property type="entry name" value="Ribosomal_S2"/>
    <property type="match status" value="2"/>
</dbReference>
<dbReference type="PRINTS" id="PR00395">
    <property type="entry name" value="RIBOSOMALS2"/>
</dbReference>
<dbReference type="SUPFAM" id="SSF52313">
    <property type="entry name" value="Ribosomal protein S2"/>
    <property type="match status" value="1"/>
</dbReference>
<organism>
    <name type="scientific">Schizosaccharomyces japonicus (strain yFS275 / FY16936)</name>
    <name type="common">Fission yeast</name>
    <dbReference type="NCBI Taxonomy" id="402676"/>
    <lineage>
        <taxon>Eukaryota</taxon>
        <taxon>Fungi</taxon>
        <taxon>Dikarya</taxon>
        <taxon>Ascomycota</taxon>
        <taxon>Taphrinomycotina</taxon>
        <taxon>Schizosaccharomycetes</taxon>
        <taxon>Schizosaccharomycetales</taxon>
        <taxon>Schizosaccharomycetaceae</taxon>
        <taxon>Schizosaccharomyces</taxon>
    </lineage>
</organism>